<gene>
    <name evidence="1" type="primary">atpA</name>
    <name type="ordered locus">CRP_007</name>
</gene>
<protein>
    <recommendedName>
        <fullName evidence="1">ATP synthase subunit alpha</fullName>
        <ecNumber evidence="1">7.1.2.2</ecNumber>
    </recommendedName>
    <alternativeName>
        <fullName evidence="1">ATP synthase F1 sector subunit alpha</fullName>
    </alternativeName>
    <alternativeName>
        <fullName evidence="1">F-ATPase subunit alpha</fullName>
    </alternativeName>
</protein>
<comment type="function">
    <text evidence="1">Produces ATP from ADP in the presence of a proton gradient across the membrane. The alpha chain is a regulatory subunit.</text>
</comment>
<comment type="catalytic activity">
    <reaction evidence="1">
        <text>ATP + H2O + 4 H(+)(in) = ADP + phosphate + 5 H(+)(out)</text>
        <dbReference type="Rhea" id="RHEA:57720"/>
        <dbReference type="ChEBI" id="CHEBI:15377"/>
        <dbReference type="ChEBI" id="CHEBI:15378"/>
        <dbReference type="ChEBI" id="CHEBI:30616"/>
        <dbReference type="ChEBI" id="CHEBI:43474"/>
        <dbReference type="ChEBI" id="CHEBI:456216"/>
        <dbReference type="EC" id="7.1.2.2"/>
    </reaction>
</comment>
<comment type="subunit">
    <text evidence="1">F-type ATPases have 2 components, CF(1) - the catalytic core - and CF(0) - the membrane proton channel. CF(1) has five subunits: alpha(3), beta(3), gamma(1), delta(1), epsilon(1). CF(0) has three main subunits: a(1), b(2) and c(9-12). The alpha and beta chains form an alternating ring which encloses part of the gamma chain. CF(1) is attached to CF(0) by a central stalk formed by the gamma and epsilon chains, while a peripheral stalk is formed by the delta and b chains.</text>
</comment>
<comment type="subcellular location">
    <subcellularLocation>
        <location evidence="1">Cell membrane</location>
        <topology evidence="1">Peripheral membrane protein</topology>
    </subcellularLocation>
</comment>
<comment type="similarity">
    <text evidence="1">Belongs to the ATPase alpha/beta chains family.</text>
</comment>
<feature type="chain" id="PRO_0000339027" description="ATP synthase subunit alpha">
    <location>
        <begin position="1"/>
        <end position="481"/>
    </location>
</feature>
<feature type="binding site" evidence="1">
    <location>
        <begin position="145"/>
        <end position="152"/>
    </location>
    <ligand>
        <name>ATP</name>
        <dbReference type="ChEBI" id="CHEBI:30616"/>
    </ligand>
</feature>
<feature type="site" description="Required for activity" evidence="1">
    <location>
        <position position="346"/>
    </location>
</feature>
<name>ATPA_CARRP</name>
<organism>
    <name type="scientific">Carsonella ruddii (strain PV)</name>
    <dbReference type="NCBI Taxonomy" id="387662"/>
    <lineage>
        <taxon>Bacteria</taxon>
        <taxon>Pseudomonadati</taxon>
        <taxon>Pseudomonadota</taxon>
        <taxon>Gammaproteobacteria</taxon>
        <taxon>Oceanospirillales</taxon>
        <taxon>Halomonadaceae</taxon>
        <taxon>Zymobacter group</taxon>
        <taxon>Candidatus Carsonella</taxon>
    </lineage>
</organism>
<proteinExistence type="inferred from homology"/>
<keyword id="KW-0066">ATP synthesis</keyword>
<keyword id="KW-0067">ATP-binding</keyword>
<keyword id="KW-1003">Cell membrane</keyword>
<keyword id="KW-0139">CF(1)</keyword>
<keyword id="KW-0375">Hydrogen ion transport</keyword>
<keyword id="KW-0406">Ion transport</keyword>
<keyword id="KW-0472">Membrane</keyword>
<keyword id="KW-0547">Nucleotide-binding</keyword>
<keyword id="KW-1278">Translocase</keyword>
<keyword id="KW-0813">Transport</keyword>
<accession>Q05FY3</accession>
<dbReference type="EC" id="7.1.2.2" evidence="1"/>
<dbReference type="EMBL" id="AP009180">
    <property type="protein sequence ID" value="BAF35038.1"/>
    <property type="molecule type" value="Genomic_DNA"/>
</dbReference>
<dbReference type="RefSeq" id="WP_011672230.1">
    <property type="nucleotide sequence ID" value="NC_008512.1"/>
</dbReference>
<dbReference type="SMR" id="Q05FY3"/>
<dbReference type="STRING" id="387662.CRP_007"/>
<dbReference type="KEGG" id="crp:CRP_007"/>
<dbReference type="HOGENOM" id="CLU_010091_2_1_6"/>
<dbReference type="OrthoDB" id="9803053at2"/>
<dbReference type="Proteomes" id="UP000000777">
    <property type="component" value="Chromosome"/>
</dbReference>
<dbReference type="GO" id="GO:0005886">
    <property type="term" value="C:plasma membrane"/>
    <property type="evidence" value="ECO:0007669"/>
    <property type="project" value="UniProtKB-SubCell"/>
</dbReference>
<dbReference type="GO" id="GO:0045259">
    <property type="term" value="C:proton-transporting ATP synthase complex"/>
    <property type="evidence" value="ECO:0007669"/>
    <property type="project" value="UniProtKB-KW"/>
</dbReference>
<dbReference type="GO" id="GO:0043531">
    <property type="term" value="F:ADP binding"/>
    <property type="evidence" value="ECO:0007669"/>
    <property type="project" value="TreeGrafter"/>
</dbReference>
<dbReference type="GO" id="GO:0005524">
    <property type="term" value="F:ATP binding"/>
    <property type="evidence" value="ECO:0007669"/>
    <property type="project" value="UniProtKB-UniRule"/>
</dbReference>
<dbReference type="GO" id="GO:0046933">
    <property type="term" value="F:proton-transporting ATP synthase activity, rotational mechanism"/>
    <property type="evidence" value="ECO:0007669"/>
    <property type="project" value="UniProtKB-UniRule"/>
</dbReference>
<dbReference type="CDD" id="cd18113">
    <property type="entry name" value="ATP-synt_F1_alpha_C"/>
    <property type="match status" value="1"/>
</dbReference>
<dbReference type="CDD" id="cd01132">
    <property type="entry name" value="F1-ATPase_alpha_CD"/>
    <property type="match status" value="1"/>
</dbReference>
<dbReference type="FunFam" id="3.40.50.300:FF:000002">
    <property type="entry name" value="ATP synthase subunit alpha"/>
    <property type="match status" value="1"/>
</dbReference>
<dbReference type="Gene3D" id="2.40.30.20">
    <property type="match status" value="1"/>
</dbReference>
<dbReference type="Gene3D" id="1.20.150.20">
    <property type="entry name" value="ATP synthase alpha/beta chain, C-terminal domain"/>
    <property type="match status" value="1"/>
</dbReference>
<dbReference type="Gene3D" id="3.40.50.300">
    <property type="entry name" value="P-loop containing nucleotide triphosphate hydrolases"/>
    <property type="match status" value="1"/>
</dbReference>
<dbReference type="HAMAP" id="MF_01346">
    <property type="entry name" value="ATP_synth_alpha_bact"/>
    <property type="match status" value="1"/>
</dbReference>
<dbReference type="InterPro" id="IPR023366">
    <property type="entry name" value="ATP_synth_asu-like_sf"/>
</dbReference>
<dbReference type="InterPro" id="IPR000793">
    <property type="entry name" value="ATP_synth_asu_C"/>
</dbReference>
<dbReference type="InterPro" id="IPR038376">
    <property type="entry name" value="ATP_synth_asu_C_sf"/>
</dbReference>
<dbReference type="InterPro" id="IPR033732">
    <property type="entry name" value="ATP_synth_F1_a_nt-bd_dom"/>
</dbReference>
<dbReference type="InterPro" id="IPR005294">
    <property type="entry name" value="ATP_synth_F1_asu"/>
</dbReference>
<dbReference type="InterPro" id="IPR020003">
    <property type="entry name" value="ATPase_a/bsu_AS"/>
</dbReference>
<dbReference type="InterPro" id="IPR036121">
    <property type="entry name" value="ATPase_F1/V1/A1_a/bsu_N_sf"/>
</dbReference>
<dbReference type="InterPro" id="IPR000194">
    <property type="entry name" value="ATPase_F1/V1/A1_a/bsu_nucl-bd"/>
</dbReference>
<dbReference type="InterPro" id="IPR027417">
    <property type="entry name" value="P-loop_NTPase"/>
</dbReference>
<dbReference type="NCBIfam" id="TIGR00962">
    <property type="entry name" value="atpA"/>
    <property type="match status" value="1"/>
</dbReference>
<dbReference type="NCBIfam" id="NF009884">
    <property type="entry name" value="PRK13343.1"/>
    <property type="match status" value="1"/>
</dbReference>
<dbReference type="PANTHER" id="PTHR48082">
    <property type="entry name" value="ATP SYNTHASE SUBUNIT ALPHA, MITOCHONDRIAL"/>
    <property type="match status" value="1"/>
</dbReference>
<dbReference type="PANTHER" id="PTHR48082:SF2">
    <property type="entry name" value="ATP SYNTHASE SUBUNIT ALPHA, MITOCHONDRIAL"/>
    <property type="match status" value="1"/>
</dbReference>
<dbReference type="Pfam" id="PF00006">
    <property type="entry name" value="ATP-synt_ab"/>
    <property type="match status" value="1"/>
</dbReference>
<dbReference type="Pfam" id="PF00306">
    <property type="entry name" value="ATP-synt_ab_C"/>
    <property type="match status" value="1"/>
</dbReference>
<dbReference type="SUPFAM" id="SSF47917">
    <property type="entry name" value="C-terminal domain of alpha and beta subunits of F1 ATP synthase"/>
    <property type="match status" value="1"/>
</dbReference>
<dbReference type="SUPFAM" id="SSF50615">
    <property type="entry name" value="N-terminal domain of alpha and beta subunits of F1 ATP synthase"/>
    <property type="match status" value="1"/>
</dbReference>
<dbReference type="SUPFAM" id="SSF52540">
    <property type="entry name" value="P-loop containing nucleoside triphosphate hydrolases"/>
    <property type="match status" value="1"/>
</dbReference>
<dbReference type="PROSITE" id="PS00152">
    <property type="entry name" value="ATPASE_ALPHA_BETA"/>
    <property type="match status" value="1"/>
</dbReference>
<sequence>MLNEGIINKIYDSVVEVLGLKNAKYGEMILFSKNIKGIVFSLNKKNVNIIILNNYNELTQGEKCYCTNKIFEVPVGKQLIGRIINSRGETLDLLPEIKINEFSPIEKIAPGVMDRETVNEPLLTGIKSIDSMIPIGKGQRELIIGDRQTGKTTICIDTIINQKNKNIICVYVCIGQKISSLINIINKLKKFNCLEYTIIVASTASDSAAEQYIAPYTGSTISEYFRDKGQDCLIVYDDLTKHAWAYRQISLLLRRPPGREAYPGDVFYLHSRLLERSSKVNKFFVNKKSNILKAGSLTAFPIIETLEGDVTSFIPTNVISITDGQIFLDTNLFNSGIRPSINVGLSVSRVGGAAQYKIIKKLSGDIRIMLAQYRELEAFSKFSSDLDSETKNQLIIGEKITILMKQNIHDVYDIFELILILLIIKHDFFRLIPINQVEYFENKIINYLRKIKFKNQIEIDNKNLENCLNELISFFISNSIL</sequence>
<reference key="1">
    <citation type="journal article" date="2006" name="Science">
        <title>The 160-kilobase genome of the bacterial endosymbiont Carsonella.</title>
        <authorList>
            <person name="Nakabachi A."/>
            <person name="Yamashita A."/>
            <person name="Toh H."/>
            <person name="Ishikawa H."/>
            <person name="Dunbar H.E."/>
            <person name="Moran N.A."/>
            <person name="Hattori M."/>
        </authorList>
    </citation>
    <scope>NUCLEOTIDE SEQUENCE [LARGE SCALE GENOMIC DNA]</scope>
    <source>
        <strain>PV</strain>
    </source>
</reference>
<evidence type="ECO:0000255" key="1">
    <source>
        <dbReference type="HAMAP-Rule" id="MF_01346"/>
    </source>
</evidence>